<gene>
    <name evidence="1" type="primary">ureA</name>
    <name type="ordered locus">Dshi_2369</name>
</gene>
<accession>A8LRS4</accession>
<name>URE3_DINSH</name>
<dbReference type="EC" id="3.5.1.5" evidence="1"/>
<dbReference type="EMBL" id="CP000830">
    <property type="protein sequence ID" value="ABV94105.1"/>
    <property type="molecule type" value="Genomic_DNA"/>
</dbReference>
<dbReference type="RefSeq" id="WP_012179036.1">
    <property type="nucleotide sequence ID" value="NC_009952.1"/>
</dbReference>
<dbReference type="SMR" id="A8LRS4"/>
<dbReference type="STRING" id="398580.Dshi_2369"/>
<dbReference type="KEGG" id="dsh:Dshi_2369"/>
<dbReference type="eggNOG" id="COG0831">
    <property type="taxonomic scope" value="Bacteria"/>
</dbReference>
<dbReference type="HOGENOM" id="CLU_145825_1_0_5"/>
<dbReference type="OrthoDB" id="9797217at2"/>
<dbReference type="UniPathway" id="UPA00258">
    <property type="reaction ID" value="UER00370"/>
</dbReference>
<dbReference type="Proteomes" id="UP000006833">
    <property type="component" value="Chromosome"/>
</dbReference>
<dbReference type="GO" id="GO:0005737">
    <property type="term" value="C:cytoplasm"/>
    <property type="evidence" value="ECO:0007669"/>
    <property type="project" value="UniProtKB-SubCell"/>
</dbReference>
<dbReference type="GO" id="GO:0016151">
    <property type="term" value="F:nickel cation binding"/>
    <property type="evidence" value="ECO:0007669"/>
    <property type="project" value="InterPro"/>
</dbReference>
<dbReference type="GO" id="GO:0009039">
    <property type="term" value="F:urease activity"/>
    <property type="evidence" value="ECO:0007669"/>
    <property type="project" value="UniProtKB-UniRule"/>
</dbReference>
<dbReference type="GO" id="GO:0043419">
    <property type="term" value="P:urea catabolic process"/>
    <property type="evidence" value="ECO:0007669"/>
    <property type="project" value="UniProtKB-UniRule"/>
</dbReference>
<dbReference type="CDD" id="cd00390">
    <property type="entry name" value="Urease_gamma"/>
    <property type="match status" value="1"/>
</dbReference>
<dbReference type="Gene3D" id="3.30.280.10">
    <property type="entry name" value="Urease, gamma-like subunit"/>
    <property type="match status" value="1"/>
</dbReference>
<dbReference type="HAMAP" id="MF_00739">
    <property type="entry name" value="Urease_gamma"/>
    <property type="match status" value="1"/>
</dbReference>
<dbReference type="InterPro" id="IPR012010">
    <property type="entry name" value="Urease_gamma"/>
</dbReference>
<dbReference type="InterPro" id="IPR002026">
    <property type="entry name" value="Urease_gamma/gamma-beta_su"/>
</dbReference>
<dbReference type="InterPro" id="IPR036463">
    <property type="entry name" value="Urease_gamma_sf"/>
</dbReference>
<dbReference type="InterPro" id="IPR050069">
    <property type="entry name" value="Urease_subunit"/>
</dbReference>
<dbReference type="NCBIfam" id="NF009712">
    <property type="entry name" value="PRK13241.1"/>
    <property type="match status" value="1"/>
</dbReference>
<dbReference type="NCBIfam" id="TIGR00193">
    <property type="entry name" value="urease_gam"/>
    <property type="match status" value="1"/>
</dbReference>
<dbReference type="PANTHER" id="PTHR33569">
    <property type="entry name" value="UREASE"/>
    <property type="match status" value="1"/>
</dbReference>
<dbReference type="PANTHER" id="PTHR33569:SF1">
    <property type="entry name" value="UREASE"/>
    <property type="match status" value="1"/>
</dbReference>
<dbReference type="Pfam" id="PF00547">
    <property type="entry name" value="Urease_gamma"/>
    <property type="match status" value="1"/>
</dbReference>
<dbReference type="PIRSF" id="PIRSF001223">
    <property type="entry name" value="Urease_gamma"/>
    <property type="match status" value="1"/>
</dbReference>
<dbReference type="SUPFAM" id="SSF54111">
    <property type="entry name" value="Urease, gamma-subunit"/>
    <property type="match status" value="1"/>
</dbReference>
<sequence>MNLTPREKDKLLVSLAAIVARGRLERGVKLNHPEAIALITDYVVEGARDGRSVADLMQAGAQVVRAEQCMPGIPEMIHDVQVEATFPDGTKLVTVHHPIR</sequence>
<keyword id="KW-0963">Cytoplasm</keyword>
<keyword id="KW-0378">Hydrolase</keyword>
<keyword id="KW-1185">Reference proteome</keyword>
<evidence type="ECO:0000255" key="1">
    <source>
        <dbReference type="HAMAP-Rule" id="MF_00739"/>
    </source>
</evidence>
<reference key="1">
    <citation type="journal article" date="2010" name="ISME J.">
        <title>The complete genome sequence of the algal symbiont Dinoroseobacter shibae: a hitchhiker's guide to life in the sea.</title>
        <authorList>
            <person name="Wagner-Dobler I."/>
            <person name="Ballhausen B."/>
            <person name="Berger M."/>
            <person name="Brinkhoff T."/>
            <person name="Buchholz I."/>
            <person name="Bunk B."/>
            <person name="Cypionka H."/>
            <person name="Daniel R."/>
            <person name="Drepper T."/>
            <person name="Gerdts G."/>
            <person name="Hahnke S."/>
            <person name="Han C."/>
            <person name="Jahn D."/>
            <person name="Kalhoefer D."/>
            <person name="Kiss H."/>
            <person name="Klenk H.P."/>
            <person name="Kyrpides N."/>
            <person name="Liebl W."/>
            <person name="Liesegang H."/>
            <person name="Meincke L."/>
            <person name="Pati A."/>
            <person name="Petersen J."/>
            <person name="Piekarski T."/>
            <person name="Pommerenke C."/>
            <person name="Pradella S."/>
            <person name="Pukall R."/>
            <person name="Rabus R."/>
            <person name="Stackebrandt E."/>
            <person name="Thole S."/>
            <person name="Thompson L."/>
            <person name="Tielen P."/>
            <person name="Tomasch J."/>
            <person name="von Jan M."/>
            <person name="Wanphrut N."/>
            <person name="Wichels A."/>
            <person name="Zech H."/>
            <person name="Simon M."/>
        </authorList>
    </citation>
    <scope>NUCLEOTIDE SEQUENCE [LARGE SCALE GENOMIC DNA]</scope>
    <source>
        <strain>DSM 16493 / NCIMB 14021 / DFL 12</strain>
    </source>
</reference>
<feature type="chain" id="PRO_1000083421" description="Urease subunit gamma">
    <location>
        <begin position="1"/>
        <end position="100"/>
    </location>
</feature>
<proteinExistence type="inferred from homology"/>
<comment type="catalytic activity">
    <reaction evidence="1">
        <text>urea + 2 H2O + H(+) = hydrogencarbonate + 2 NH4(+)</text>
        <dbReference type="Rhea" id="RHEA:20557"/>
        <dbReference type="ChEBI" id="CHEBI:15377"/>
        <dbReference type="ChEBI" id="CHEBI:15378"/>
        <dbReference type="ChEBI" id="CHEBI:16199"/>
        <dbReference type="ChEBI" id="CHEBI:17544"/>
        <dbReference type="ChEBI" id="CHEBI:28938"/>
        <dbReference type="EC" id="3.5.1.5"/>
    </reaction>
</comment>
<comment type="pathway">
    <text evidence="1">Nitrogen metabolism; urea degradation; CO(2) and NH(3) from urea (urease route): step 1/1.</text>
</comment>
<comment type="subunit">
    <text evidence="1">Heterotrimer of UreA (gamma), UreB (beta) and UreC (alpha) subunits. Three heterotrimers associate to form the active enzyme.</text>
</comment>
<comment type="subcellular location">
    <subcellularLocation>
        <location evidence="1">Cytoplasm</location>
    </subcellularLocation>
</comment>
<comment type="similarity">
    <text evidence="1">Belongs to the urease gamma subunit family.</text>
</comment>
<protein>
    <recommendedName>
        <fullName evidence="1">Urease subunit gamma</fullName>
        <ecNumber evidence="1">3.5.1.5</ecNumber>
    </recommendedName>
    <alternativeName>
        <fullName evidence="1">Urea amidohydrolase subunit gamma</fullName>
    </alternativeName>
</protein>
<organism>
    <name type="scientific">Dinoroseobacter shibae (strain DSM 16493 / NCIMB 14021 / DFL 12)</name>
    <dbReference type="NCBI Taxonomy" id="398580"/>
    <lineage>
        <taxon>Bacteria</taxon>
        <taxon>Pseudomonadati</taxon>
        <taxon>Pseudomonadota</taxon>
        <taxon>Alphaproteobacteria</taxon>
        <taxon>Rhodobacterales</taxon>
        <taxon>Roseobacteraceae</taxon>
        <taxon>Dinoroseobacter</taxon>
    </lineage>
</organism>